<reference key="1">
    <citation type="submission" date="2007-06" db="EMBL/GenBank/DDBJ databases">
        <title>Complete sequence of Sinorhizobium medicae WSM419 chromosome.</title>
        <authorList>
            <consortium name="US DOE Joint Genome Institute"/>
            <person name="Copeland A."/>
            <person name="Lucas S."/>
            <person name="Lapidus A."/>
            <person name="Barry K."/>
            <person name="Glavina del Rio T."/>
            <person name="Dalin E."/>
            <person name="Tice H."/>
            <person name="Pitluck S."/>
            <person name="Chain P."/>
            <person name="Malfatti S."/>
            <person name="Shin M."/>
            <person name="Vergez L."/>
            <person name="Schmutz J."/>
            <person name="Larimer F."/>
            <person name="Land M."/>
            <person name="Hauser L."/>
            <person name="Kyrpides N."/>
            <person name="Mikhailova N."/>
            <person name="Reeve W.G."/>
            <person name="Richardson P."/>
        </authorList>
    </citation>
    <scope>NUCLEOTIDE SEQUENCE [LARGE SCALE GENOMIC DNA]</scope>
    <source>
        <strain>WSM419</strain>
    </source>
</reference>
<comment type="similarity">
    <text evidence="1">Belongs to the universal ribosomal protein uS9 family.</text>
</comment>
<gene>
    <name evidence="1" type="primary">rpsI</name>
    <name type="ordered locus">Smed_0861</name>
</gene>
<evidence type="ECO:0000255" key="1">
    <source>
        <dbReference type="HAMAP-Rule" id="MF_00532"/>
    </source>
</evidence>
<evidence type="ECO:0000305" key="2"/>
<keyword id="KW-0687">Ribonucleoprotein</keyword>
<keyword id="KW-0689">Ribosomal protein</keyword>
<name>RS9_SINMW</name>
<sequence length="155" mass="16728">MADLSALKDIATTAEPAAPVHVKKVDAQGRSYATGKRKDAVARVWIKPGSGKITVNGKPFSDYFARPVLQMILQQPVVAAARDGQFDIDATVAGGGLSGQAGAVRHGISKALTYFEPGLRAVLKRGGFLTRDSRVVERKKYGRAKARRSFQFSKR</sequence>
<feature type="chain" id="PRO_1000051332" description="Small ribosomal subunit protein uS9">
    <location>
        <begin position="1"/>
        <end position="155"/>
    </location>
</feature>
<accession>A6U7T6</accession>
<dbReference type="EMBL" id="CP000738">
    <property type="protein sequence ID" value="ABR59716.1"/>
    <property type="molecule type" value="Genomic_DNA"/>
</dbReference>
<dbReference type="RefSeq" id="WP_011975055.1">
    <property type="nucleotide sequence ID" value="NC_009636.1"/>
</dbReference>
<dbReference type="RefSeq" id="YP_001326551.1">
    <property type="nucleotide sequence ID" value="NC_009636.1"/>
</dbReference>
<dbReference type="SMR" id="A6U7T6"/>
<dbReference type="STRING" id="366394.Smed_0861"/>
<dbReference type="GeneID" id="61612305"/>
<dbReference type="KEGG" id="smd:Smed_0861"/>
<dbReference type="PATRIC" id="fig|366394.8.peg.3975"/>
<dbReference type="eggNOG" id="COG0103">
    <property type="taxonomic scope" value="Bacteria"/>
</dbReference>
<dbReference type="HOGENOM" id="CLU_046483_2_0_5"/>
<dbReference type="OrthoDB" id="9803965at2"/>
<dbReference type="Proteomes" id="UP000001108">
    <property type="component" value="Chromosome"/>
</dbReference>
<dbReference type="GO" id="GO:0022627">
    <property type="term" value="C:cytosolic small ribosomal subunit"/>
    <property type="evidence" value="ECO:0007669"/>
    <property type="project" value="TreeGrafter"/>
</dbReference>
<dbReference type="GO" id="GO:0003723">
    <property type="term" value="F:RNA binding"/>
    <property type="evidence" value="ECO:0007669"/>
    <property type="project" value="TreeGrafter"/>
</dbReference>
<dbReference type="GO" id="GO:0003735">
    <property type="term" value="F:structural constituent of ribosome"/>
    <property type="evidence" value="ECO:0007669"/>
    <property type="project" value="InterPro"/>
</dbReference>
<dbReference type="GO" id="GO:0006412">
    <property type="term" value="P:translation"/>
    <property type="evidence" value="ECO:0007669"/>
    <property type="project" value="UniProtKB-UniRule"/>
</dbReference>
<dbReference type="FunFam" id="3.30.230.10:FF:000001">
    <property type="entry name" value="30S ribosomal protein S9"/>
    <property type="match status" value="1"/>
</dbReference>
<dbReference type="Gene3D" id="3.30.230.10">
    <property type="match status" value="1"/>
</dbReference>
<dbReference type="HAMAP" id="MF_00532_B">
    <property type="entry name" value="Ribosomal_uS9_B"/>
    <property type="match status" value="1"/>
</dbReference>
<dbReference type="InterPro" id="IPR020568">
    <property type="entry name" value="Ribosomal_Su5_D2-typ_SF"/>
</dbReference>
<dbReference type="InterPro" id="IPR000754">
    <property type="entry name" value="Ribosomal_uS9"/>
</dbReference>
<dbReference type="InterPro" id="IPR023035">
    <property type="entry name" value="Ribosomal_uS9_bac/plastid"/>
</dbReference>
<dbReference type="InterPro" id="IPR020574">
    <property type="entry name" value="Ribosomal_uS9_CS"/>
</dbReference>
<dbReference type="InterPro" id="IPR014721">
    <property type="entry name" value="Ribsml_uS5_D2-typ_fold_subgr"/>
</dbReference>
<dbReference type="NCBIfam" id="NF001099">
    <property type="entry name" value="PRK00132.1"/>
    <property type="match status" value="1"/>
</dbReference>
<dbReference type="PANTHER" id="PTHR21569">
    <property type="entry name" value="RIBOSOMAL PROTEIN S9"/>
    <property type="match status" value="1"/>
</dbReference>
<dbReference type="PANTHER" id="PTHR21569:SF1">
    <property type="entry name" value="SMALL RIBOSOMAL SUBUNIT PROTEIN US9M"/>
    <property type="match status" value="1"/>
</dbReference>
<dbReference type="Pfam" id="PF00380">
    <property type="entry name" value="Ribosomal_S9"/>
    <property type="match status" value="1"/>
</dbReference>
<dbReference type="SUPFAM" id="SSF54211">
    <property type="entry name" value="Ribosomal protein S5 domain 2-like"/>
    <property type="match status" value="1"/>
</dbReference>
<dbReference type="PROSITE" id="PS00360">
    <property type="entry name" value="RIBOSOMAL_S9"/>
    <property type="match status" value="1"/>
</dbReference>
<protein>
    <recommendedName>
        <fullName evidence="1">Small ribosomal subunit protein uS9</fullName>
    </recommendedName>
    <alternativeName>
        <fullName evidence="2">30S ribosomal protein S9</fullName>
    </alternativeName>
</protein>
<organism>
    <name type="scientific">Sinorhizobium medicae (strain WSM419)</name>
    <name type="common">Ensifer medicae</name>
    <dbReference type="NCBI Taxonomy" id="366394"/>
    <lineage>
        <taxon>Bacteria</taxon>
        <taxon>Pseudomonadati</taxon>
        <taxon>Pseudomonadota</taxon>
        <taxon>Alphaproteobacteria</taxon>
        <taxon>Hyphomicrobiales</taxon>
        <taxon>Rhizobiaceae</taxon>
        <taxon>Sinorhizobium/Ensifer group</taxon>
        <taxon>Sinorhizobium</taxon>
    </lineage>
</organism>
<proteinExistence type="inferred from homology"/>